<dbReference type="EC" id="6.3.2.8" evidence="1"/>
<dbReference type="EMBL" id="CP001175">
    <property type="protein sequence ID" value="ACK39306.1"/>
    <property type="molecule type" value="Genomic_DNA"/>
</dbReference>
<dbReference type="RefSeq" id="WP_003729643.1">
    <property type="nucleotide sequence ID" value="NC_011660.1"/>
</dbReference>
<dbReference type="SMR" id="B8DHD7"/>
<dbReference type="KEGG" id="lmh:LMHCC_0958"/>
<dbReference type="HOGENOM" id="CLU_028104_1_0_9"/>
<dbReference type="UniPathway" id="UPA00219"/>
<dbReference type="GO" id="GO:0005737">
    <property type="term" value="C:cytoplasm"/>
    <property type="evidence" value="ECO:0007669"/>
    <property type="project" value="UniProtKB-SubCell"/>
</dbReference>
<dbReference type="GO" id="GO:0005524">
    <property type="term" value="F:ATP binding"/>
    <property type="evidence" value="ECO:0007669"/>
    <property type="project" value="UniProtKB-UniRule"/>
</dbReference>
<dbReference type="GO" id="GO:0008763">
    <property type="term" value="F:UDP-N-acetylmuramate-L-alanine ligase activity"/>
    <property type="evidence" value="ECO:0007669"/>
    <property type="project" value="UniProtKB-UniRule"/>
</dbReference>
<dbReference type="GO" id="GO:0051301">
    <property type="term" value="P:cell division"/>
    <property type="evidence" value="ECO:0007669"/>
    <property type="project" value="UniProtKB-KW"/>
</dbReference>
<dbReference type="GO" id="GO:0071555">
    <property type="term" value="P:cell wall organization"/>
    <property type="evidence" value="ECO:0007669"/>
    <property type="project" value="UniProtKB-KW"/>
</dbReference>
<dbReference type="GO" id="GO:0009252">
    <property type="term" value="P:peptidoglycan biosynthetic process"/>
    <property type="evidence" value="ECO:0007669"/>
    <property type="project" value="UniProtKB-UniRule"/>
</dbReference>
<dbReference type="GO" id="GO:0008360">
    <property type="term" value="P:regulation of cell shape"/>
    <property type="evidence" value="ECO:0007669"/>
    <property type="project" value="UniProtKB-KW"/>
</dbReference>
<dbReference type="Gene3D" id="3.90.190.20">
    <property type="entry name" value="Mur ligase, C-terminal domain"/>
    <property type="match status" value="1"/>
</dbReference>
<dbReference type="Gene3D" id="3.40.1190.10">
    <property type="entry name" value="Mur-like, catalytic domain"/>
    <property type="match status" value="1"/>
</dbReference>
<dbReference type="Gene3D" id="3.40.50.720">
    <property type="entry name" value="NAD(P)-binding Rossmann-like Domain"/>
    <property type="match status" value="1"/>
</dbReference>
<dbReference type="HAMAP" id="MF_00046">
    <property type="entry name" value="MurC"/>
    <property type="match status" value="1"/>
</dbReference>
<dbReference type="InterPro" id="IPR036565">
    <property type="entry name" value="Mur-like_cat_sf"/>
</dbReference>
<dbReference type="InterPro" id="IPR004101">
    <property type="entry name" value="Mur_ligase_C"/>
</dbReference>
<dbReference type="InterPro" id="IPR036615">
    <property type="entry name" value="Mur_ligase_C_dom_sf"/>
</dbReference>
<dbReference type="InterPro" id="IPR013221">
    <property type="entry name" value="Mur_ligase_cen"/>
</dbReference>
<dbReference type="InterPro" id="IPR000713">
    <property type="entry name" value="Mur_ligase_N"/>
</dbReference>
<dbReference type="InterPro" id="IPR050061">
    <property type="entry name" value="MurCDEF_pg_biosynth"/>
</dbReference>
<dbReference type="InterPro" id="IPR005758">
    <property type="entry name" value="UDP-N-AcMur_Ala_ligase_MurC"/>
</dbReference>
<dbReference type="NCBIfam" id="TIGR01082">
    <property type="entry name" value="murC"/>
    <property type="match status" value="1"/>
</dbReference>
<dbReference type="PANTHER" id="PTHR43445:SF3">
    <property type="entry name" value="UDP-N-ACETYLMURAMATE--L-ALANINE LIGASE"/>
    <property type="match status" value="1"/>
</dbReference>
<dbReference type="PANTHER" id="PTHR43445">
    <property type="entry name" value="UDP-N-ACETYLMURAMATE--L-ALANINE LIGASE-RELATED"/>
    <property type="match status" value="1"/>
</dbReference>
<dbReference type="Pfam" id="PF01225">
    <property type="entry name" value="Mur_ligase"/>
    <property type="match status" value="1"/>
</dbReference>
<dbReference type="Pfam" id="PF02875">
    <property type="entry name" value="Mur_ligase_C"/>
    <property type="match status" value="1"/>
</dbReference>
<dbReference type="Pfam" id="PF08245">
    <property type="entry name" value="Mur_ligase_M"/>
    <property type="match status" value="1"/>
</dbReference>
<dbReference type="SUPFAM" id="SSF51984">
    <property type="entry name" value="MurCD N-terminal domain"/>
    <property type="match status" value="1"/>
</dbReference>
<dbReference type="SUPFAM" id="SSF53623">
    <property type="entry name" value="MurD-like peptide ligases, catalytic domain"/>
    <property type="match status" value="1"/>
</dbReference>
<dbReference type="SUPFAM" id="SSF53244">
    <property type="entry name" value="MurD-like peptide ligases, peptide-binding domain"/>
    <property type="match status" value="1"/>
</dbReference>
<organism>
    <name type="scientific">Listeria monocytogenes serotype 4a (strain HCC23)</name>
    <dbReference type="NCBI Taxonomy" id="552536"/>
    <lineage>
        <taxon>Bacteria</taxon>
        <taxon>Bacillati</taxon>
        <taxon>Bacillota</taxon>
        <taxon>Bacilli</taxon>
        <taxon>Bacillales</taxon>
        <taxon>Listeriaceae</taxon>
        <taxon>Listeria</taxon>
    </lineage>
</organism>
<name>MURC_LISMH</name>
<accession>B8DHD7</accession>
<comment type="function">
    <text evidence="1">Cell wall formation.</text>
</comment>
<comment type="catalytic activity">
    <reaction evidence="1">
        <text>UDP-N-acetyl-alpha-D-muramate + L-alanine + ATP = UDP-N-acetyl-alpha-D-muramoyl-L-alanine + ADP + phosphate + H(+)</text>
        <dbReference type="Rhea" id="RHEA:23372"/>
        <dbReference type="ChEBI" id="CHEBI:15378"/>
        <dbReference type="ChEBI" id="CHEBI:30616"/>
        <dbReference type="ChEBI" id="CHEBI:43474"/>
        <dbReference type="ChEBI" id="CHEBI:57972"/>
        <dbReference type="ChEBI" id="CHEBI:70757"/>
        <dbReference type="ChEBI" id="CHEBI:83898"/>
        <dbReference type="ChEBI" id="CHEBI:456216"/>
        <dbReference type="EC" id="6.3.2.8"/>
    </reaction>
</comment>
<comment type="pathway">
    <text evidence="1">Cell wall biogenesis; peptidoglycan biosynthesis.</text>
</comment>
<comment type="subcellular location">
    <subcellularLocation>
        <location evidence="1">Cytoplasm</location>
    </subcellularLocation>
</comment>
<comment type="similarity">
    <text evidence="1">Belongs to the MurCDEF family.</text>
</comment>
<keyword id="KW-0067">ATP-binding</keyword>
<keyword id="KW-0131">Cell cycle</keyword>
<keyword id="KW-0132">Cell division</keyword>
<keyword id="KW-0133">Cell shape</keyword>
<keyword id="KW-0961">Cell wall biogenesis/degradation</keyword>
<keyword id="KW-0963">Cytoplasm</keyword>
<keyword id="KW-0436">Ligase</keyword>
<keyword id="KW-0547">Nucleotide-binding</keyword>
<keyword id="KW-0573">Peptidoglycan synthesis</keyword>
<gene>
    <name evidence="1" type="primary">murC</name>
    <name type="ordered locus">LMHCC_0958</name>
</gene>
<reference key="1">
    <citation type="journal article" date="2011" name="J. Bacteriol.">
        <title>Genome sequence of lineage III Listeria monocytogenes strain HCC23.</title>
        <authorList>
            <person name="Steele C.L."/>
            <person name="Donaldson J.R."/>
            <person name="Paul D."/>
            <person name="Banes M.M."/>
            <person name="Arick T."/>
            <person name="Bridges S.M."/>
            <person name="Lawrence M.L."/>
        </authorList>
    </citation>
    <scope>NUCLEOTIDE SEQUENCE [LARGE SCALE GENOMIC DNA]</scope>
    <source>
        <strain>HCC23</strain>
    </source>
</reference>
<proteinExistence type="inferred from homology"/>
<sequence length="447" mass="49890">MTIYHFVGIKGSGMSALAQILHDKGFQVQGSDVDKYFFTQKALEEKQIPIMTFSADNIQEGLTIIAGNAFPDTHEEIERALELGLPVIRYHKFLGQLIDGYTSIAITGSHGKTSTTGLLSHVVGAIRPTSYLIGDGTGSGTKGAEYFALEACEYQRHFLAYKPTYAIMTNIDWDHPDYFKSVDDVFNAFETLGKQVKKAVFALGDDAELRKLSLDIPIIYFGFGEENEFQAKNVIKETTGTKFDVYHRGEFLGSFEIPAYGDHNVLNALSVIALCDYEGLPVEDVKKELKTFEGVKRRFSITEKANQVLVDDYAHHPSEIRATVNAARQKYPDKKVVAVFQPHTFTRTRTFLQGFADSLNLADEVYLCDIFGSAREKTGNLTIADLAHKTKGNHIIKEEHTEELLKYPEAVILFMGAGDVQKFQAAYEKVLDHEVLTEADLKKSAIN</sequence>
<feature type="chain" id="PRO_1000192097" description="UDP-N-acetylmuramate--L-alanine ligase">
    <location>
        <begin position="1"/>
        <end position="447"/>
    </location>
</feature>
<feature type="binding site" evidence="1">
    <location>
        <begin position="108"/>
        <end position="114"/>
    </location>
    <ligand>
        <name>ATP</name>
        <dbReference type="ChEBI" id="CHEBI:30616"/>
    </ligand>
</feature>
<evidence type="ECO:0000255" key="1">
    <source>
        <dbReference type="HAMAP-Rule" id="MF_00046"/>
    </source>
</evidence>
<protein>
    <recommendedName>
        <fullName evidence="1">UDP-N-acetylmuramate--L-alanine ligase</fullName>
        <ecNumber evidence="1">6.3.2.8</ecNumber>
    </recommendedName>
    <alternativeName>
        <fullName evidence="1">UDP-N-acetylmuramoyl-L-alanine synthetase</fullName>
    </alternativeName>
</protein>